<organism>
    <name type="scientific">Clostridium botulinum</name>
    <dbReference type="NCBI Taxonomy" id="1491"/>
    <lineage>
        <taxon>Bacteria</taxon>
        <taxon>Bacillati</taxon>
        <taxon>Bacillota</taxon>
        <taxon>Clostridia</taxon>
        <taxon>Eubacteriales</taxon>
        <taxon>Clostridiaceae</taxon>
        <taxon>Clostridium</taxon>
    </lineage>
</organism>
<protein>
    <recommendedName>
        <fullName>Non-toxic nonhemagglutinin type E</fullName>
        <shortName>NTNHA</shortName>
    </recommendedName>
    <alternativeName>
        <fullName>Botulinum neurotoxin type E non-toxic component</fullName>
    </alternativeName>
</protein>
<comment type="function">
    <text evidence="1">Assembles with botulinum neurotoxin type E (BoNT/E) and protects it against pH-mediated inactivation or protease activity at pH 2.6 (the pH of the animal gastrointestinal tract) but not at pH 6.0 (By similarity). The non-toxic component is necessary to maintain toxicity.</text>
</comment>
<comment type="subunit">
    <text evidence="1">Forms a highly interlocked heterodimer with botulinum neurotoxin type E at pH 6.0 but not at pH 7.5 (By similarity).</text>
</comment>
<comment type="similarity">
    <text evidence="2">Belongs to the botulism non-toxic nonhemagglutinin family.</text>
</comment>
<reference key="1">
    <citation type="journal article" date="1993" name="J. Gen. Microbiol.">
        <title>The complete nucleotide sequence of the gene encoding the nontoxic component of Clostridium botulinum type E progenitor toxin.</title>
        <authorList>
            <person name="Fujii N."/>
            <person name="Kimura K."/>
            <person name="Yokosawa N."/>
            <person name="Yashiki T."/>
            <person name="Tsuzuki K."/>
            <person name="Oguma K."/>
        </authorList>
    </citation>
    <scope>NUCLEOTIDE SEQUENCE [GENOMIC DNA]</scope>
    <source>
        <strain>Mashike / Type E</strain>
    </source>
</reference>
<accession>P46082</accession>
<dbReference type="EMBL" id="D12697">
    <property type="protein sequence ID" value="BAA02194.1"/>
    <property type="molecule type" value="Genomic_DNA"/>
</dbReference>
<dbReference type="PIR" id="A47708">
    <property type="entry name" value="A47708"/>
</dbReference>
<dbReference type="PDB" id="9ARJ">
    <property type="method" value="EM"/>
    <property type="resolution" value="3.40 A"/>
    <property type="chains" value="B=1-1162"/>
</dbReference>
<dbReference type="PDB" id="9ARK">
    <property type="method" value="EM"/>
    <property type="resolution" value="4.10 A"/>
    <property type="chains" value="B=1-1162"/>
</dbReference>
<dbReference type="PDBsum" id="9ARJ"/>
<dbReference type="PDBsum" id="9ARK"/>
<dbReference type="SMR" id="P46082"/>
<dbReference type="GO" id="GO:0005576">
    <property type="term" value="C:extracellular region"/>
    <property type="evidence" value="ECO:0007669"/>
    <property type="project" value="InterPro"/>
</dbReference>
<dbReference type="GO" id="GO:0004222">
    <property type="term" value="F:metalloendopeptidase activity"/>
    <property type="evidence" value="ECO:0007669"/>
    <property type="project" value="InterPro"/>
</dbReference>
<dbReference type="GO" id="GO:0008270">
    <property type="term" value="F:zinc ion binding"/>
    <property type="evidence" value="ECO:0007669"/>
    <property type="project" value="InterPro"/>
</dbReference>
<dbReference type="GO" id="GO:0006508">
    <property type="term" value="P:proteolysis"/>
    <property type="evidence" value="ECO:0007669"/>
    <property type="project" value="InterPro"/>
</dbReference>
<dbReference type="Gene3D" id="2.60.120.200">
    <property type="match status" value="1"/>
</dbReference>
<dbReference type="Gene3D" id="2.80.10.50">
    <property type="match status" value="1"/>
</dbReference>
<dbReference type="Gene3D" id="1.20.1120.10">
    <property type="entry name" value="Clostridium botulinum neurotoxin b, 'coiled-coil' domain"/>
    <property type="match status" value="1"/>
</dbReference>
<dbReference type="Gene3D" id="3.90.1240.10">
    <property type="entry name" value="Metalloproteases ('zincins'), catalytic domain like"/>
    <property type="match status" value="1"/>
</dbReference>
<dbReference type="InterPro" id="IPR000395">
    <property type="entry name" value="Bot/tetX_LC"/>
</dbReference>
<dbReference type="InterPro" id="IPR036248">
    <property type="entry name" value="Clostridium_toxin_transloc"/>
</dbReference>
<dbReference type="InterPro" id="IPR013320">
    <property type="entry name" value="ConA-like_dom_sf"/>
</dbReference>
<dbReference type="InterPro" id="IPR013677">
    <property type="entry name" value="Nontoxic_nonhemagglutn_C"/>
</dbReference>
<dbReference type="InterPro" id="IPR012928">
    <property type="entry name" value="Toxin_rcpt-bd_N"/>
</dbReference>
<dbReference type="NCBIfam" id="NF033911">
    <property type="entry name" value="botu_NTNH"/>
    <property type="match status" value="1"/>
</dbReference>
<dbReference type="Pfam" id="PF08470">
    <property type="entry name" value="NTNH_C"/>
    <property type="match status" value="1"/>
</dbReference>
<dbReference type="Pfam" id="PF01742">
    <property type="entry name" value="Peptidase_M27"/>
    <property type="match status" value="1"/>
</dbReference>
<dbReference type="Pfam" id="PF22133">
    <property type="entry name" value="Toxin_BN_H"/>
    <property type="match status" value="1"/>
</dbReference>
<dbReference type="Pfam" id="PF07953">
    <property type="entry name" value="Toxin_R_bind_N"/>
    <property type="match status" value="1"/>
</dbReference>
<dbReference type="PRINTS" id="PR00760">
    <property type="entry name" value="BONTOXILYSIN"/>
</dbReference>
<dbReference type="SUPFAM" id="SSF58091">
    <property type="entry name" value="Clostridium neurotoxins, 'coiled-coil' domain"/>
    <property type="match status" value="1"/>
</dbReference>
<dbReference type="SUPFAM" id="SSF49899">
    <property type="entry name" value="Concanavalin A-like lectins/glucanases"/>
    <property type="match status" value="1"/>
</dbReference>
<dbReference type="SUPFAM" id="SSF55486">
    <property type="entry name" value="Metalloproteases ('zincins'), catalytic domain"/>
    <property type="match status" value="1"/>
</dbReference>
<proteinExistence type="evidence at protein level"/>
<gene>
    <name type="primary">ent-120</name>
</gene>
<keyword id="KW-0002">3D-structure</keyword>
<keyword id="KW-0843">Virulence</keyword>
<sequence>MKINGNLNIDSPVDNKNVAIVRSRNQMFFKAFQVAPNIWIVPERYYGESLKINEDQKFDGGIYDSNFLSTNNEKDDFLQATIKLLQRINNNVVGAKLLSLISTAIPFPYENNTEDYRQTNYLSSKNNEHYYTANLVIFGPGSNIIKNNVIYYKKEYAESGMGTMLEIWFQPFLTHKYDEFYVDPALELIKCLIKSLYYLYGIKPNDNLNIPYRLRNEFNSLEYSELNMIDFLISGGIDYKLLNTNPYWFIDKYFIDTSKNFEKYKNDYEIKIKNNNYIANSIKLYLEQKFKINVKDIWELNLSYFSKEFQIMMPERYNNALNHYYRKEFYVIDYFKNYNINGFKNGQIKTKLPLSKYNKEIINKPELIVNLINQNNTVLMKSNIYGDGLKGTVDNFYSNYIIPYNLNYEHSINYFYLDNVNIEEIEKIPPINDEDIYPYRKNADTFIPVYNITKAKEINTTTPLPVNYLQAQMIDSNDINLSSDFLKVISSKGSLVYSFLNNTMDYLEFIKYDKPIDTDKKYYKWLKAIFRNYSLDITETQEISNQFGDTKIIPWIGRALNILNTNNSFVEEFKNLGPISLINKKENITIPKIKIDEIPSSMLNFSFKDLSENLFNIYCKNNFYLKKIYYNFLDQWWTQYYSQYFDLICMASKSVLAQEKLIKKLIQKQLRYLMENSNISSTNLILINLTTTNTLRDISNQSQIAINNIDKFFNNAAMCVFENNIYPKFTSFMEQCIKNINKSTKEFILKCTNINETEKSHLIMQNSFSNLDFDFLDIQNMKNLFNLYTELLIKEQTSPYELSLYAFQEQDNNVIGDTSGKNTLVEYPKDIGLVYGINNNAIHLTGANQNIKFTNDYFENGLTNNFSIYFWLRNLKQNTIKSKLIGSKEDNCGWEIYFENDGLVFNIIDSNGNEKNIYLSNISNKSWHYIVISINRLKDQLLIFIDNILVANEDIKEILNIYSSDIISLLSDNNNVYIEGLSVLNKTINSNEILTDYFSDLNNSYIRNFDEEILQYNRTYELFNYVFPEIAINKIEQNNNIYLSINNENNLNFKPLKFKLLNTNPNKQYVQKWDEVIFSVLDGTEKYLDISTTNNRIQLVDNKNNAQIFIINNDIFISNCLTLTYNNVNVYLSIKNQDYNWVICDLNHDIPKKSYLWILKNI</sequence>
<name>BXEN_CLOBO</name>
<evidence type="ECO:0000250" key="1">
    <source>
        <dbReference type="UniProtKB" id="Q45914"/>
    </source>
</evidence>
<evidence type="ECO:0000305" key="2"/>
<feature type="chain" id="PRO_0000065029" description="Non-toxic nonhemagglutinin type E">
    <location>
        <begin position="1"/>
        <end position="1162"/>
    </location>
</feature>